<sequence length="542" mass="60644">MKFIFITGGVVSSLGKGITASSIGRLLKARGFKINMVKIDPYLQIDAGTMSPYEHGEVFVTDDGGETDLDLGNYERFVDIKLSANNNITTGKVYWSVLSKERRGDYLGKTVQVIPHITNEIKELIKSTGTNCDITIVEIGGTVGDIESLPFLEAIRQFKKDVGDNNVLYVHVSLLPYIKTAGEIKTKPTQHSVKELRGIGIQPNILVCRTEIPISEKTREKLALFCDVEKDAVIEAKDARTIYEVPLNLEREGIAKLIINKLKLNTNNSKPDLKEWRAMVDRIVNPLNEITIGIVGKYIMLKDAYTSITESLVHAGAKHDTKVNIEWISSEELRDETYKETMDKLVEDEKLDGILIPGGFGERGIDGKVNASKYARENNIPYLGICLGMQCAVIDFARNVCNLKGANSTEFDEGAPFPVIDYLPEQRDIEDKGGTMRLGEYKAILKEGSLAQKLYNEKEAFERHRHRYEVNPEYHDILTENGLIISGTSPDGKLAEFIELDTLTHPYFIATQAHPEFKSRPNKPHPLFDGLVKSALDKKLKK</sequence>
<proteinExistence type="inferred from homology"/>
<evidence type="ECO:0000255" key="1">
    <source>
        <dbReference type="HAMAP-Rule" id="MF_01227"/>
    </source>
</evidence>
<gene>
    <name evidence="1" type="primary">pyrG</name>
    <name type="ordered locus">Maeo_0174</name>
</gene>
<dbReference type="EC" id="6.3.4.2" evidence="1"/>
<dbReference type="EMBL" id="CP000743">
    <property type="protein sequence ID" value="ABR55766.1"/>
    <property type="molecule type" value="Genomic_DNA"/>
</dbReference>
<dbReference type="RefSeq" id="WP_011972898.1">
    <property type="nucleotide sequence ID" value="NC_009635.1"/>
</dbReference>
<dbReference type="SMR" id="A6UTE4"/>
<dbReference type="STRING" id="419665.Maeo_0174"/>
<dbReference type="GeneID" id="5326750"/>
<dbReference type="GeneID" id="75305596"/>
<dbReference type="KEGG" id="mae:Maeo_0174"/>
<dbReference type="eggNOG" id="arCOG00063">
    <property type="taxonomic scope" value="Archaea"/>
</dbReference>
<dbReference type="HOGENOM" id="CLU_011675_5_0_2"/>
<dbReference type="OrthoDB" id="52769at2157"/>
<dbReference type="UniPathway" id="UPA00159">
    <property type="reaction ID" value="UER00277"/>
</dbReference>
<dbReference type="Proteomes" id="UP000001106">
    <property type="component" value="Chromosome"/>
</dbReference>
<dbReference type="GO" id="GO:0005829">
    <property type="term" value="C:cytosol"/>
    <property type="evidence" value="ECO:0007669"/>
    <property type="project" value="TreeGrafter"/>
</dbReference>
<dbReference type="GO" id="GO:0005524">
    <property type="term" value="F:ATP binding"/>
    <property type="evidence" value="ECO:0007669"/>
    <property type="project" value="UniProtKB-KW"/>
</dbReference>
<dbReference type="GO" id="GO:0003883">
    <property type="term" value="F:CTP synthase activity"/>
    <property type="evidence" value="ECO:0007669"/>
    <property type="project" value="UniProtKB-UniRule"/>
</dbReference>
<dbReference type="GO" id="GO:0004359">
    <property type="term" value="F:glutaminase activity"/>
    <property type="evidence" value="ECO:0007669"/>
    <property type="project" value="RHEA"/>
</dbReference>
<dbReference type="GO" id="GO:0042802">
    <property type="term" value="F:identical protein binding"/>
    <property type="evidence" value="ECO:0007669"/>
    <property type="project" value="TreeGrafter"/>
</dbReference>
<dbReference type="GO" id="GO:0046872">
    <property type="term" value="F:metal ion binding"/>
    <property type="evidence" value="ECO:0007669"/>
    <property type="project" value="UniProtKB-KW"/>
</dbReference>
<dbReference type="GO" id="GO:0044210">
    <property type="term" value="P:'de novo' CTP biosynthetic process"/>
    <property type="evidence" value="ECO:0007669"/>
    <property type="project" value="UniProtKB-UniRule"/>
</dbReference>
<dbReference type="GO" id="GO:0019856">
    <property type="term" value="P:pyrimidine nucleobase biosynthetic process"/>
    <property type="evidence" value="ECO:0007669"/>
    <property type="project" value="TreeGrafter"/>
</dbReference>
<dbReference type="CDD" id="cd03113">
    <property type="entry name" value="CTPS_N"/>
    <property type="match status" value="1"/>
</dbReference>
<dbReference type="CDD" id="cd01746">
    <property type="entry name" value="GATase1_CTP_Synthase"/>
    <property type="match status" value="1"/>
</dbReference>
<dbReference type="FunFam" id="3.40.50.300:FF:000009">
    <property type="entry name" value="CTP synthase"/>
    <property type="match status" value="1"/>
</dbReference>
<dbReference type="FunFam" id="3.40.50.880:FF:000002">
    <property type="entry name" value="CTP synthase"/>
    <property type="match status" value="1"/>
</dbReference>
<dbReference type="Gene3D" id="3.40.50.880">
    <property type="match status" value="1"/>
</dbReference>
<dbReference type="Gene3D" id="3.40.50.300">
    <property type="entry name" value="P-loop containing nucleotide triphosphate hydrolases"/>
    <property type="match status" value="1"/>
</dbReference>
<dbReference type="HAMAP" id="MF_01227">
    <property type="entry name" value="PyrG"/>
    <property type="match status" value="1"/>
</dbReference>
<dbReference type="InterPro" id="IPR029062">
    <property type="entry name" value="Class_I_gatase-like"/>
</dbReference>
<dbReference type="InterPro" id="IPR004468">
    <property type="entry name" value="CTP_synthase"/>
</dbReference>
<dbReference type="InterPro" id="IPR017456">
    <property type="entry name" value="CTP_synthase_N"/>
</dbReference>
<dbReference type="InterPro" id="IPR017926">
    <property type="entry name" value="GATASE"/>
</dbReference>
<dbReference type="InterPro" id="IPR033828">
    <property type="entry name" value="GATase1_CTP_Synthase"/>
</dbReference>
<dbReference type="InterPro" id="IPR027417">
    <property type="entry name" value="P-loop_NTPase"/>
</dbReference>
<dbReference type="NCBIfam" id="NF003792">
    <property type="entry name" value="PRK05380.1"/>
    <property type="match status" value="1"/>
</dbReference>
<dbReference type="NCBIfam" id="TIGR00337">
    <property type="entry name" value="PyrG"/>
    <property type="match status" value="1"/>
</dbReference>
<dbReference type="PANTHER" id="PTHR11550">
    <property type="entry name" value="CTP SYNTHASE"/>
    <property type="match status" value="1"/>
</dbReference>
<dbReference type="PANTHER" id="PTHR11550:SF0">
    <property type="entry name" value="CTP SYNTHASE-RELATED"/>
    <property type="match status" value="1"/>
</dbReference>
<dbReference type="Pfam" id="PF06418">
    <property type="entry name" value="CTP_synth_N"/>
    <property type="match status" value="1"/>
</dbReference>
<dbReference type="Pfam" id="PF00117">
    <property type="entry name" value="GATase"/>
    <property type="match status" value="1"/>
</dbReference>
<dbReference type="SUPFAM" id="SSF52317">
    <property type="entry name" value="Class I glutamine amidotransferase-like"/>
    <property type="match status" value="1"/>
</dbReference>
<dbReference type="SUPFAM" id="SSF52540">
    <property type="entry name" value="P-loop containing nucleoside triphosphate hydrolases"/>
    <property type="match status" value="1"/>
</dbReference>
<dbReference type="PROSITE" id="PS51273">
    <property type="entry name" value="GATASE_TYPE_1"/>
    <property type="match status" value="1"/>
</dbReference>
<comment type="function">
    <text evidence="1">Catalyzes the ATP-dependent amination of UTP to CTP with either L-glutamine or ammonia as the source of nitrogen. Regulates intracellular CTP levels through interactions with the four ribonucleotide triphosphates.</text>
</comment>
<comment type="catalytic activity">
    <reaction evidence="1">
        <text>UTP + L-glutamine + ATP + H2O = CTP + L-glutamate + ADP + phosphate + 2 H(+)</text>
        <dbReference type="Rhea" id="RHEA:26426"/>
        <dbReference type="ChEBI" id="CHEBI:15377"/>
        <dbReference type="ChEBI" id="CHEBI:15378"/>
        <dbReference type="ChEBI" id="CHEBI:29985"/>
        <dbReference type="ChEBI" id="CHEBI:30616"/>
        <dbReference type="ChEBI" id="CHEBI:37563"/>
        <dbReference type="ChEBI" id="CHEBI:43474"/>
        <dbReference type="ChEBI" id="CHEBI:46398"/>
        <dbReference type="ChEBI" id="CHEBI:58359"/>
        <dbReference type="ChEBI" id="CHEBI:456216"/>
        <dbReference type="EC" id="6.3.4.2"/>
    </reaction>
</comment>
<comment type="catalytic activity">
    <reaction evidence="1">
        <text>L-glutamine + H2O = L-glutamate + NH4(+)</text>
        <dbReference type="Rhea" id="RHEA:15889"/>
        <dbReference type="ChEBI" id="CHEBI:15377"/>
        <dbReference type="ChEBI" id="CHEBI:28938"/>
        <dbReference type="ChEBI" id="CHEBI:29985"/>
        <dbReference type="ChEBI" id="CHEBI:58359"/>
    </reaction>
</comment>
<comment type="catalytic activity">
    <reaction evidence="1">
        <text>UTP + NH4(+) + ATP = CTP + ADP + phosphate + 2 H(+)</text>
        <dbReference type="Rhea" id="RHEA:16597"/>
        <dbReference type="ChEBI" id="CHEBI:15378"/>
        <dbReference type="ChEBI" id="CHEBI:28938"/>
        <dbReference type="ChEBI" id="CHEBI:30616"/>
        <dbReference type="ChEBI" id="CHEBI:37563"/>
        <dbReference type="ChEBI" id="CHEBI:43474"/>
        <dbReference type="ChEBI" id="CHEBI:46398"/>
        <dbReference type="ChEBI" id="CHEBI:456216"/>
    </reaction>
</comment>
<comment type="activity regulation">
    <text evidence="1">Allosterically activated by GTP, when glutamine is the substrate; GTP has no effect on the reaction when ammonia is the substrate. The allosteric effector GTP functions by stabilizing the protein conformation that binds the tetrahedral intermediate(s) formed during glutamine hydrolysis. Inhibited by the product CTP, via allosteric rather than competitive inhibition.</text>
</comment>
<comment type="pathway">
    <text evidence="1">Pyrimidine metabolism; CTP biosynthesis via de novo pathway; CTP from UDP: step 2/2.</text>
</comment>
<comment type="subunit">
    <text evidence="1">Homotetramer.</text>
</comment>
<comment type="miscellaneous">
    <text evidence="1">CTPSs have evolved a hybrid strategy for distinguishing between UTP and CTP. The overlapping regions of the product feedback inhibitory and substrate sites recognize a common feature in both compounds, the triphosphate moiety. To differentiate isosteric substrate and product pyrimidine rings, an additional pocket far from the expected kinase/ligase catalytic site, specifically recognizes the cytosine and ribose portions of the product inhibitor.</text>
</comment>
<comment type="similarity">
    <text evidence="1">Belongs to the CTP synthase family.</text>
</comment>
<feature type="chain" id="PRO_1000139483" description="CTP synthase">
    <location>
        <begin position="1"/>
        <end position="542"/>
    </location>
</feature>
<feature type="domain" description="Glutamine amidotransferase type-1" evidence="1">
    <location>
        <begin position="298"/>
        <end position="541"/>
    </location>
</feature>
<feature type="region of interest" description="Amidoligase domain" evidence="1">
    <location>
        <begin position="1"/>
        <end position="264"/>
    </location>
</feature>
<feature type="active site" description="Nucleophile; for glutamine hydrolysis" evidence="1">
    <location>
        <position position="386"/>
    </location>
</feature>
<feature type="active site" evidence="1">
    <location>
        <position position="514"/>
    </location>
</feature>
<feature type="active site" evidence="1">
    <location>
        <position position="516"/>
    </location>
</feature>
<feature type="binding site" evidence="1">
    <location>
        <position position="12"/>
    </location>
    <ligand>
        <name>CTP</name>
        <dbReference type="ChEBI" id="CHEBI:37563"/>
        <note>allosteric inhibitor</note>
    </ligand>
</feature>
<feature type="binding site" evidence="1">
    <location>
        <position position="12"/>
    </location>
    <ligand>
        <name>UTP</name>
        <dbReference type="ChEBI" id="CHEBI:46398"/>
    </ligand>
</feature>
<feature type="binding site" evidence="1">
    <location>
        <begin position="13"/>
        <end position="18"/>
    </location>
    <ligand>
        <name>ATP</name>
        <dbReference type="ChEBI" id="CHEBI:30616"/>
    </ligand>
</feature>
<feature type="binding site" evidence="1">
    <location>
        <position position="53"/>
    </location>
    <ligand>
        <name>L-glutamine</name>
        <dbReference type="ChEBI" id="CHEBI:58359"/>
    </ligand>
</feature>
<feature type="binding site" evidence="1">
    <location>
        <position position="70"/>
    </location>
    <ligand>
        <name>ATP</name>
        <dbReference type="ChEBI" id="CHEBI:30616"/>
    </ligand>
</feature>
<feature type="binding site" evidence="1">
    <location>
        <position position="70"/>
    </location>
    <ligand>
        <name>Mg(2+)</name>
        <dbReference type="ChEBI" id="CHEBI:18420"/>
    </ligand>
</feature>
<feature type="binding site" evidence="1">
    <location>
        <position position="138"/>
    </location>
    <ligand>
        <name>Mg(2+)</name>
        <dbReference type="ChEBI" id="CHEBI:18420"/>
    </ligand>
</feature>
<feature type="binding site" evidence="1">
    <location>
        <begin position="145"/>
        <end position="147"/>
    </location>
    <ligand>
        <name>CTP</name>
        <dbReference type="ChEBI" id="CHEBI:37563"/>
        <note>allosteric inhibitor</note>
    </ligand>
</feature>
<feature type="binding site" evidence="1">
    <location>
        <begin position="185"/>
        <end position="190"/>
    </location>
    <ligand>
        <name>CTP</name>
        <dbReference type="ChEBI" id="CHEBI:37563"/>
        <note>allosteric inhibitor</note>
    </ligand>
</feature>
<feature type="binding site" evidence="1">
    <location>
        <begin position="185"/>
        <end position="190"/>
    </location>
    <ligand>
        <name>UTP</name>
        <dbReference type="ChEBI" id="CHEBI:46398"/>
    </ligand>
</feature>
<feature type="binding site" evidence="1">
    <location>
        <position position="221"/>
    </location>
    <ligand>
        <name>CTP</name>
        <dbReference type="ChEBI" id="CHEBI:37563"/>
        <note>allosteric inhibitor</note>
    </ligand>
</feature>
<feature type="binding site" evidence="1">
    <location>
        <position position="221"/>
    </location>
    <ligand>
        <name>UTP</name>
        <dbReference type="ChEBI" id="CHEBI:46398"/>
    </ligand>
</feature>
<feature type="binding site" evidence="1">
    <location>
        <begin position="237"/>
        <end position="239"/>
    </location>
    <ligand>
        <name>ATP</name>
        <dbReference type="ChEBI" id="CHEBI:30616"/>
    </ligand>
</feature>
<feature type="binding site" evidence="1">
    <location>
        <position position="359"/>
    </location>
    <ligand>
        <name>L-glutamine</name>
        <dbReference type="ChEBI" id="CHEBI:58359"/>
    </ligand>
</feature>
<feature type="binding site" evidence="1">
    <location>
        <begin position="387"/>
        <end position="390"/>
    </location>
    <ligand>
        <name>L-glutamine</name>
        <dbReference type="ChEBI" id="CHEBI:58359"/>
    </ligand>
</feature>
<feature type="binding site" evidence="1">
    <location>
        <position position="410"/>
    </location>
    <ligand>
        <name>L-glutamine</name>
        <dbReference type="ChEBI" id="CHEBI:58359"/>
    </ligand>
</feature>
<feature type="binding site" evidence="1">
    <location>
        <position position="467"/>
    </location>
    <ligand>
        <name>L-glutamine</name>
        <dbReference type="ChEBI" id="CHEBI:58359"/>
    </ligand>
</feature>
<organism>
    <name type="scientific">Methanococcus aeolicus (strain ATCC BAA-1280 / DSM 17508 / OCM 812 / Nankai-3)</name>
    <dbReference type="NCBI Taxonomy" id="419665"/>
    <lineage>
        <taxon>Archaea</taxon>
        <taxon>Methanobacteriati</taxon>
        <taxon>Methanobacteriota</taxon>
        <taxon>Methanomada group</taxon>
        <taxon>Methanococci</taxon>
        <taxon>Methanococcales</taxon>
        <taxon>Methanococcaceae</taxon>
        <taxon>Methanococcus</taxon>
    </lineage>
</organism>
<protein>
    <recommendedName>
        <fullName evidence="1">CTP synthase</fullName>
        <ecNumber evidence="1">6.3.4.2</ecNumber>
    </recommendedName>
    <alternativeName>
        <fullName evidence="1">Cytidine 5'-triphosphate synthase</fullName>
    </alternativeName>
    <alternativeName>
        <fullName evidence="1">Cytidine triphosphate synthetase</fullName>
        <shortName evidence="1">CTP synthetase</shortName>
        <shortName evidence="1">CTPS</shortName>
    </alternativeName>
    <alternativeName>
        <fullName evidence="1">UTP--ammonia ligase</fullName>
    </alternativeName>
</protein>
<reference key="1">
    <citation type="submission" date="2007-06" db="EMBL/GenBank/DDBJ databases">
        <title>Complete sequence of Methanococcus aeolicus Nankai-3.</title>
        <authorList>
            <consortium name="US DOE Joint Genome Institute"/>
            <person name="Copeland A."/>
            <person name="Lucas S."/>
            <person name="Lapidus A."/>
            <person name="Barry K."/>
            <person name="Glavina del Rio T."/>
            <person name="Dalin E."/>
            <person name="Tice H."/>
            <person name="Pitluck S."/>
            <person name="Chain P."/>
            <person name="Malfatti S."/>
            <person name="Shin M."/>
            <person name="Vergez L."/>
            <person name="Schmutz J."/>
            <person name="Larimer F."/>
            <person name="Land M."/>
            <person name="Hauser L."/>
            <person name="Kyrpides N."/>
            <person name="Lykidis A."/>
            <person name="Sieprawska-Lupa M."/>
            <person name="Whitman W.B."/>
            <person name="Richardson P."/>
        </authorList>
    </citation>
    <scope>NUCLEOTIDE SEQUENCE [LARGE SCALE GENOMIC DNA]</scope>
    <source>
        <strain>ATCC BAA-1280 / DSM 17508 / OCM 812 / Nankai-3</strain>
    </source>
</reference>
<accession>A6UTE4</accession>
<name>PYRG_META3</name>
<keyword id="KW-0067">ATP-binding</keyword>
<keyword id="KW-0315">Glutamine amidotransferase</keyword>
<keyword id="KW-0436">Ligase</keyword>
<keyword id="KW-0460">Magnesium</keyword>
<keyword id="KW-0479">Metal-binding</keyword>
<keyword id="KW-0547">Nucleotide-binding</keyword>
<keyword id="KW-0665">Pyrimidine biosynthesis</keyword>